<name>HOA3_RHIWR</name>
<gene>
    <name type="ordered locus">Swit_4923</name>
</gene>
<dbReference type="EC" id="4.1.3.39" evidence="1"/>
<dbReference type="EMBL" id="CP000701">
    <property type="protein sequence ID" value="ABQ71543.1"/>
    <property type="molecule type" value="Genomic_DNA"/>
</dbReference>
<dbReference type="SMR" id="A5VGU4"/>
<dbReference type="KEGG" id="swi:Swit_4923"/>
<dbReference type="HOGENOM" id="CLU_049173_0_0_5"/>
<dbReference type="OrthoDB" id="9803573at2"/>
<dbReference type="Proteomes" id="UP000001989">
    <property type="component" value="Plasmid pSWIT02"/>
</dbReference>
<dbReference type="GO" id="GO:0003852">
    <property type="term" value="F:2-isopropylmalate synthase activity"/>
    <property type="evidence" value="ECO:0007669"/>
    <property type="project" value="TreeGrafter"/>
</dbReference>
<dbReference type="GO" id="GO:0008701">
    <property type="term" value="F:4-hydroxy-2-oxovalerate aldolase activity"/>
    <property type="evidence" value="ECO:0007669"/>
    <property type="project" value="UniProtKB-UniRule"/>
</dbReference>
<dbReference type="GO" id="GO:0030145">
    <property type="term" value="F:manganese ion binding"/>
    <property type="evidence" value="ECO:0007669"/>
    <property type="project" value="UniProtKB-UniRule"/>
</dbReference>
<dbReference type="GO" id="GO:0009056">
    <property type="term" value="P:catabolic process"/>
    <property type="evidence" value="ECO:0007669"/>
    <property type="project" value="UniProtKB-KW"/>
</dbReference>
<dbReference type="GO" id="GO:0009098">
    <property type="term" value="P:L-leucine biosynthetic process"/>
    <property type="evidence" value="ECO:0007669"/>
    <property type="project" value="TreeGrafter"/>
</dbReference>
<dbReference type="CDD" id="cd07943">
    <property type="entry name" value="DRE_TIM_HOA"/>
    <property type="match status" value="1"/>
</dbReference>
<dbReference type="Gene3D" id="1.10.8.60">
    <property type="match status" value="1"/>
</dbReference>
<dbReference type="Gene3D" id="3.20.20.70">
    <property type="entry name" value="Aldolase class I"/>
    <property type="match status" value="1"/>
</dbReference>
<dbReference type="HAMAP" id="MF_01656">
    <property type="entry name" value="HOA"/>
    <property type="match status" value="1"/>
</dbReference>
<dbReference type="InterPro" id="IPR050073">
    <property type="entry name" value="2-IPM_HCS-like"/>
</dbReference>
<dbReference type="InterPro" id="IPR017629">
    <property type="entry name" value="4OH_2_O-val_aldolase"/>
</dbReference>
<dbReference type="InterPro" id="IPR013785">
    <property type="entry name" value="Aldolase_TIM"/>
</dbReference>
<dbReference type="InterPro" id="IPR012425">
    <property type="entry name" value="DmpG_comm"/>
</dbReference>
<dbReference type="InterPro" id="IPR035685">
    <property type="entry name" value="DRE_TIM_HOA"/>
</dbReference>
<dbReference type="InterPro" id="IPR000891">
    <property type="entry name" value="PYR_CT"/>
</dbReference>
<dbReference type="NCBIfam" id="TIGR03217">
    <property type="entry name" value="4OH_2_O_val_ald"/>
    <property type="match status" value="1"/>
</dbReference>
<dbReference type="NCBIfam" id="NF006049">
    <property type="entry name" value="PRK08195.1"/>
    <property type="match status" value="1"/>
</dbReference>
<dbReference type="PANTHER" id="PTHR10277:SF9">
    <property type="entry name" value="2-ISOPROPYLMALATE SYNTHASE 1, CHLOROPLASTIC-RELATED"/>
    <property type="match status" value="1"/>
</dbReference>
<dbReference type="PANTHER" id="PTHR10277">
    <property type="entry name" value="HOMOCITRATE SYNTHASE-RELATED"/>
    <property type="match status" value="1"/>
</dbReference>
<dbReference type="Pfam" id="PF07836">
    <property type="entry name" value="DmpG_comm"/>
    <property type="match status" value="1"/>
</dbReference>
<dbReference type="Pfam" id="PF00682">
    <property type="entry name" value="HMGL-like"/>
    <property type="match status" value="1"/>
</dbReference>
<dbReference type="SUPFAM" id="SSF51569">
    <property type="entry name" value="Aldolase"/>
    <property type="match status" value="1"/>
</dbReference>
<dbReference type="SUPFAM" id="SSF89000">
    <property type="entry name" value="post-HMGL domain-like"/>
    <property type="match status" value="1"/>
</dbReference>
<dbReference type="PROSITE" id="PS50991">
    <property type="entry name" value="PYR_CT"/>
    <property type="match status" value="1"/>
</dbReference>
<keyword id="KW-0058">Aromatic hydrocarbons catabolism</keyword>
<keyword id="KW-0456">Lyase</keyword>
<keyword id="KW-0464">Manganese</keyword>
<keyword id="KW-0479">Metal-binding</keyword>
<keyword id="KW-0614">Plasmid</keyword>
<keyword id="KW-1185">Reference proteome</keyword>
<feature type="chain" id="PRO_0000387921" description="4-hydroxy-2-oxovalerate aldolase 3">
    <location>
        <begin position="1"/>
        <end position="341"/>
    </location>
</feature>
<feature type="domain" description="Pyruvate carboxyltransferase" evidence="1">
    <location>
        <begin position="10"/>
        <end position="262"/>
    </location>
</feature>
<feature type="active site" description="Proton acceptor" evidence="1">
    <location>
        <position position="22"/>
    </location>
</feature>
<feature type="binding site" evidence="1">
    <location>
        <begin position="18"/>
        <end position="19"/>
    </location>
    <ligand>
        <name>substrate</name>
    </ligand>
</feature>
<feature type="binding site" evidence="1">
    <location>
        <position position="19"/>
    </location>
    <ligand>
        <name>Mn(2+)</name>
        <dbReference type="ChEBI" id="CHEBI:29035"/>
    </ligand>
</feature>
<feature type="binding site" evidence="1">
    <location>
        <position position="172"/>
    </location>
    <ligand>
        <name>substrate</name>
    </ligand>
</feature>
<feature type="binding site" evidence="1">
    <location>
        <position position="201"/>
    </location>
    <ligand>
        <name>Mn(2+)</name>
        <dbReference type="ChEBI" id="CHEBI:29035"/>
    </ligand>
</feature>
<feature type="binding site" evidence="1">
    <location>
        <position position="201"/>
    </location>
    <ligand>
        <name>substrate</name>
    </ligand>
</feature>
<feature type="binding site" evidence="1">
    <location>
        <position position="203"/>
    </location>
    <ligand>
        <name>Mn(2+)</name>
        <dbReference type="ChEBI" id="CHEBI:29035"/>
    </ligand>
</feature>
<feature type="binding site" evidence="1">
    <location>
        <position position="292"/>
    </location>
    <ligand>
        <name>substrate</name>
    </ligand>
</feature>
<feature type="site" description="Transition state stabilizer" evidence="1">
    <location>
        <position position="18"/>
    </location>
</feature>
<geneLocation type="plasmid">
    <name>pSWIT02</name>
</geneLocation>
<accession>A5VGU4</accession>
<comment type="catalytic activity">
    <reaction evidence="1">
        <text>(S)-4-hydroxy-2-oxopentanoate = acetaldehyde + pyruvate</text>
        <dbReference type="Rhea" id="RHEA:22624"/>
        <dbReference type="ChEBI" id="CHEBI:15343"/>
        <dbReference type="ChEBI" id="CHEBI:15361"/>
        <dbReference type="ChEBI" id="CHEBI:73143"/>
        <dbReference type="EC" id="4.1.3.39"/>
    </reaction>
</comment>
<comment type="similarity">
    <text evidence="1">Belongs to the 4-hydroxy-2-oxovalerate aldolase family.</text>
</comment>
<organism>
    <name type="scientific">Rhizorhabdus wittichii (strain DSM 6014 / CCUG 31198 / JCM 15750 / NBRC 105917 / EY 4224 / RW1)</name>
    <name type="common">Sphingomonas wittichii</name>
    <dbReference type="NCBI Taxonomy" id="392499"/>
    <lineage>
        <taxon>Bacteria</taxon>
        <taxon>Pseudomonadati</taxon>
        <taxon>Pseudomonadota</taxon>
        <taxon>Alphaproteobacteria</taxon>
        <taxon>Sphingomonadales</taxon>
        <taxon>Sphingomonadaceae</taxon>
        <taxon>Rhizorhabdus</taxon>
    </lineage>
</organism>
<sequence length="341" mass="37126">MSFDPNMQKLYIQDVTLRDGMHAIRHQYGLDHVQAIARALDRAKVDAIEVAHGDGLQGSSFNYGFGAYTDWDWIGAVAEVLEHSVLTTLLLPGIGTVHDLKHAYEMGVRSVRIATHCTEADVSKQHIEAARNLGMDVSGFLMMSHMIDPEALAEQALLMESYGAHCVYVTDSGGAMNMDEYAARCQAYDRVLKPETQRGVHAHHNLSLGVANSIVAVQNGVVRVDASLAGMGAGAGNAPLEVFIAAADRMGWNHGCDLFALMDAAEDLVRPLQDRPVRVDRETLTLGYAGVYSSFLRHAEKASSDYGVDTRSILAEVGRRKMVGGQEDMIVDIALDMVKAR</sequence>
<reference key="1">
    <citation type="journal article" date="2010" name="J. Bacteriol.">
        <title>Genome sequence of the dioxin-mineralizing bacterium Sphingomonas wittichii RW1.</title>
        <authorList>
            <person name="Miller T.R."/>
            <person name="Delcher A.L."/>
            <person name="Salzberg S.L."/>
            <person name="Saunders E."/>
            <person name="Detter J.C."/>
            <person name="Halden R.U."/>
        </authorList>
    </citation>
    <scope>NUCLEOTIDE SEQUENCE [LARGE SCALE GENOMIC DNA]</scope>
    <source>
        <strain>DSM 6014 / CCUG 31198 / JCM 15750 / NBRC 105917 / EY 4224 / RW1</strain>
    </source>
</reference>
<protein>
    <recommendedName>
        <fullName evidence="1">4-hydroxy-2-oxovalerate aldolase 3</fullName>
        <shortName evidence="1">HOA 3</shortName>
        <ecNumber evidence="1">4.1.3.39</ecNumber>
    </recommendedName>
    <alternativeName>
        <fullName evidence="1">4-hydroxy-2-keto-pentanoic acid aldolase 3</fullName>
    </alternativeName>
    <alternativeName>
        <fullName evidence="1">4-hydroxy-2-oxopentanoate aldolase 3</fullName>
    </alternativeName>
</protein>
<proteinExistence type="inferred from homology"/>
<evidence type="ECO:0000255" key="1">
    <source>
        <dbReference type="HAMAP-Rule" id="MF_01656"/>
    </source>
</evidence>